<keyword id="KW-0963">Cytoplasm</keyword>
<keyword id="KW-0255">Endonuclease</keyword>
<keyword id="KW-0378">Hydrolase</keyword>
<keyword id="KW-0460">Magnesium</keyword>
<keyword id="KW-0479">Metal-binding</keyword>
<keyword id="KW-0507">mRNA processing</keyword>
<keyword id="KW-0540">Nuclease</keyword>
<keyword id="KW-0694">RNA-binding</keyword>
<keyword id="KW-0698">rRNA processing</keyword>
<keyword id="KW-0699">rRNA-binding</keyword>
<keyword id="KW-0819">tRNA processing</keyword>
<feature type="chain" id="PRO_1000075791" description="Ribonuclease 3">
    <location>
        <begin position="1"/>
        <end position="229"/>
    </location>
</feature>
<feature type="domain" description="RNase III" evidence="1">
    <location>
        <begin position="5"/>
        <end position="127"/>
    </location>
</feature>
<feature type="domain" description="DRBM" evidence="1">
    <location>
        <begin position="154"/>
        <end position="224"/>
    </location>
</feature>
<feature type="active site" evidence="1">
    <location>
        <position position="44"/>
    </location>
</feature>
<feature type="active site" evidence="1">
    <location>
        <position position="116"/>
    </location>
</feature>
<feature type="binding site" evidence="1">
    <location>
        <position position="40"/>
    </location>
    <ligand>
        <name>Mg(2+)</name>
        <dbReference type="ChEBI" id="CHEBI:18420"/>
    </ligand>
</feature>
<feature type="binding site" evidence="1">
    <location>
        <position position="113"/>
    </location>
    <ligand>
        <name>Mg(2+)</name>
        <dbReference type="ChEBI" id="CHEBI:18420"/>
    </ligand>
</feature>
<feature type="binding site" evidence="1">
    <location>
        <position position="116"/>
    </location>
    <ligand>
        <name>Mg(2+)</name>
        <dbReference type="ChEBI" id="CHEBI:18420"/>
    </ligand>
</feature>
<comment type="function">
    <text evidence="1">Digests double-stranded RNA. Involved in the processing of primary rRNA transcript to yield the immediate precursors to the large and small rRNAs (23S and 16S). Processes some mRNAs, and tRNAs when they are encoded in the rRNA operon. Processes pre-crRNA and tracrRNA of type II CRISPR loci if present in the organism.</text>
</comment>
<comment type="catalytic activity">
    <reaction evidence="1">
        <text>Endonucleolytic cleavage to 5'-phosphomonoester.</text>
        <dbReference type="EC" id="3.1.26.3"/>
    </reaction>
</comment>
<comment type="cofactor">
    <cofactor evidence="1">
        <name>Mg(2+)</name>
        <dbReference type="ChEBI" id="CHEBI:18420"/>
    </cofactor>
</comment>
<comment type="subunit">
    <text evidence="1">Homodimer.</text>
</comment>
<comment type="subcellular location">
    <subcellularLocation>
        <location evidence="1">Cytoplasm</location>
    </subcellularLocation>
</comment>
<comment type="similarity">
    <text evidence="1">Belongs to the ribonuclease III family.</text>
</comment>
<evidence type="ECO:0000255" key="1">
    <source>
        <dbReference type="HAMAP-Rule" id="MF_00104"/>
    </source>
</evidence>
<reference key="1">
    <citation type="submission" date="2008-01" db="EMBL/GenBank/DDBJ databases">
        <title>Complete sequence of Pseudomonas putida GB-1.</title>
        <authorList>
            <consortium name="US DOE Joint Genome Institute"/>
            <person name="Copeland A."/>
            <person name="Lucas S."/>
            <person name="Lapidus A."/>
            <person name="Barry K."/>
            <person name="Glavina del Rio T."/>
            <person name="Dalin E."/>
            <person name="Tice H."/>
            <person name="Pitluck S."/>
            <person name="Bruce D."/>
            <person name="Goodwin L."/>
            <person name="Chertkov O."/>
            <person name="Brettin T."/>
            <person name="Detter J.C."/>
            <person name="Han C."/>
            <person name="Kuske C.R."/>
            <person name="Schmutz J."/>
            <person name="Larimer F."/>
            <person name="Land M."/>
            <person name="Hauser L."/>
            <person name="Kyrpides N."/>
            <person name="Kim E."/>
            <person name="McCarthy J.K."/>
            <person name="Richardson P."/>
        </authorList>
    </citation>
    <scope>NUCLEOTIDE SEQUENCE [LARGE SCALE GENOMIC DNA]</scope>
    <source>
        <strain>GB-1</strain>
    </source>
</reference>
<accession>B0KV27</accession>
<sequence length="229" mass="25610">MTASLARLERKLGYTFKNQDQMLLALTHRSYAGRNNERLEFLGDAILNFVAGEALFERFPQAREGQLSRLRARLVKGETLARLARGFDLGEYLRLGSGELKSGGFRRESILADALEALIGAIYLDADMDTARERVLAWLADEFEGLTLVDTNKDPKTRLQEFLQSRSCELPRYEVVDIQGEPHCRTFFVECEVVLLNNKSRGQGVSRRIAEQVAAASALIALGVENGND</sequence>
<gene>
    <name evidence="1" type="primary">rnc</name>
    <name type="ordered locus">PputGB1_4374</name>
</gene>
<proteinExistence type="inferred from homology"/>
<organism>
    <name type="scientific">Pseudomonas putida (strain GB-1)</name>
    <dbReference type="NCBI Taxonomy" id="76869"/>
    <lineage>
        <taxon>Bacteria</taxon>
        <taxon>Pseudomonadati</taxon>
        <taxon>Pseudomonadota</taxon>
        <taxon>Gammaproteobacteria</taxon>
        <taxon>Pseudomonadales</taxon>
        <taxon>Pseudomonadaceae</taxon>
        <taxon>Pseudomonas</taxon>
    </lineage>
</organism>
<dbReference type="EC" id="3.1.26.3" evidence="1"/>
<dbReference type="EMBL" id="CP000926">
    <property type="protein sequence ID" value="ABZ00263.1"/>
    <property type="molecule type" value="Genomic_DNA"/>
</dbReference>
<dbReference type="RefSeq" id="WP_012273927.1">
    <property type="nucleotide sequence ID" value="NC_010322.1"/>
</dbReference>
<dbReference type="SMR" id="B0KV27"/>
<dbReference type="KEGG" id="ppg:PputGB1_4374"/>
<dbReference type="eggNOG" id="COG0571">
    <property type="taxonomic scope" value="Bacteria"/>
</dbReference>
<dbReference type="HOGENOM" id="CLU_000907_1_1_6"/>
<dbReference type="Proteomes" id="UP000002157">
    <property type="component" value="Chromosome"/>
</dbReference>
<dbReference type="GO" id="GO:0005737">
    <property type="term" value="C:cytoplasm"/>
    <property type="evidence" value="ECO:0007669"/>
    <property type="project" value="UniProtKB-SubCell"/>
</dbReference>
<dbReference type="GO" id="GO:0046872">
    <property type="term" value="F:metal ion binding"/>
    <property type="evidence" value="ECO:0007669"/>
    <property type="project" value="UniProtKB-KW"/>
</dbReference>
<dbReference type="GO" id="GO:0004525">
    <property type="term" value="F:ribonuclease III activity"/>
    <property type="evidence" value="ECO:0007669"/>
    <property type="project" value="UniProtKB-UniRule"/>
</dbReference>
<dbReference type="GO" id="GO:0019843">
    <property type="term" value="F:rRNA binding"/>
    <property type="evidence" value="ECO:0007669"/>
    <property type="project" value="UniProtKB-KW"/>
</dbReference>
<dbReference type="GO" id="GO:0006397">
    <property type="term" value="P:mRNA processing"/>
    <property type="evidence" value="ECO:0007669"/>
    <property type="project" value="UniProtKB-UniRule"/>
</dbReference>
<dbReference type="GO" id="GO:0006364">
    <property type="term" value="P:rRNA processing"/>
    <property type="evidence" value="ECO:0007669"/>
    <property type="project" value="UniProtKB-UniRule"/>
</dbReference>
<dbReference type="GO" id="GO:0008033">
    <property type="term" value="P:tRNA processing"/>
    <property type="evidence" value="ECO:0007669"/>
    <property type="project" value="UniProtKB-KW"/>
</dbReference>
<dbReference type="CDD" id="cd10845">
    <property type="entry name" value="DSRM_RNAse_III_family"/>
    <property type="match status" value="1"/>
</dbReference>
<dbReference type="CDD" id="cd00593">
    <property type="entry name" value="RIBOc"/>
    <property type="match status" value="1"/>
</dbReference>
<dbReference type="FunFam" id="1.10.1520.10:FF:000001">
    <property type="entry name" value="Ribonuclease 3"/>
    <property type="match status" value="1"/>
</dbReference>
<dbReference type="FunFam" id="3.30.160.20:FF:000003">
    <property type="entry name" value="Ribonuclease 3"/>
    <property type="match status" value="1"/>
</dbReference>
<dbReference type="Gene3D" id="3.30.160.20">
    <property type="match status" value="1"/>
</dbReference>
<dbReference type="Gene3D" id="1.10.1520.10">
    <property type="entry name" value="Ribonuclease III domain"/>
    <property type="match status" value="1"/>
</dbReference>
<dbReference type="HAMAP" id="MF_00104">
    <property type="entry name" value="RNase_III"/>
    <property type="match status" value="1"/>
</dbReference>
<dbReference type="InterPro" id="IPR014720">
    <property type="entry name" value="dsRBD_dom"/>
</dbReference>
<dbReference type="InterPro" id="IPR011907">
    <property type="entry name" value="RNase_III"/>
</dbReference>
<dbReference type="InterPro" id="IPR000999">
    <property type="entry name" value="RNase_III_dom"/>
</dbReference>
<dbReference type="InterPro" id="IPR036389">
    <property type="entry name" value="RNase_III_sf"/>
</dbReference>
<dbReference type="NCBIfam" id="TIGR02191">
    <property type="entry name" value="RNaseIII"/>
    <property type="match status" value="1"/>
</dbReference>
<dbReference type="PANTHER" id="PTHR14950">
    <property type="entry name" value="DICER-RELATED"/>
    <property type="match status" value="1"/>
</dbReference>
<dbReference type="PANTHER" id="PTHR14950:SF37">
    <property type="entry name" value="ENDORIBONUCLEASE DICER"/>
    <property type="match status" value="1"/>
</dbReference>
<dbReference type="Pfam" id="PF00035">
    <property type="entry name" value="dsrm"/>
    <property type="match status" value="1"/>
</dbReference>
<dbReference type="Pfam" id="PF14622">
    <property type="entry name" value="Ribonucleas_3_3"/>
    <property type="match status" value="1"/>
</dbReference>
<dbReference type="SMART" id="SM00358">
    <property type="entry name" value="DSRM"/>
    <property type="match status" value="1"/>
</dbReference>
<dbReference type="SMART" id="SM00535">
    <property type="entry name" value="RIBOc"/>
    <property type="match status" value="1"/>
</dbReference>
<dbReference type="SUPFAM" id="SSF54768">
    <property type="entry name" value="dsRNA-binding domain-like"/>
    <property type="match status" value="1"/>
</dbReference>
<dbReference type="SUPFAM" id="SSF69065">
    <property type="entry name" value="RNase III domain-like"/>
    <property type="match status" value="1"/>
</dbReference>
<dbReference type="PROSITE" id="PS50137">
    <property type="entry name" value="DS_RBD"/>
    <property type="match status" value="1"/>
</dbReference>
<dbReference type="PROSITE" id="PS00517">
    <property type="entry name" value="RNASE_3_1"/>
    <property type="match status" value="1"/>
</dbReference>
<dbReference type="PROSITE" id="PS50142">
    <property type="entry name" value="RNASE_3_2"/>
    <property type="match status" value="1"/>
</dbReference>
<protein>
    <recommendedName>
        <fullName evidence="1">Ribonuclease 3</fullName>
        <ecNumber evidence="1">3.1.26.3</ecNumber>
    </recommendedName>
    <alternativeName>
        <fullName evidence="1">Ribonuclease III</fullName>
        <shortName evidence="1">RNase III</shortName>
    </alternativeName>
</protein>
<name>RNC_PSEPG</name>